<gene>
    <name type="primary">JAL25</name>
    <name type="ordered locus">At2g43740</name>
    <name type="ORF">F18O19.15</name>
</gene>
<proteinExistence type="evidence at transcript level"/>
<protein>
    <recommendedName>
        <fullName>Jacalin-related lectin 25</fullName>
    </recommendedName>
</protein>
<reference key="1">
    <citation type="journal article" date="1999" name="Nature">
        <title>Sequence and analysis of chromosome 2 of the plant Arabidopsis thaliana.</title>
        <authorList>
            <person name="Lin X."/>
            <person name="Kaul S."/>
            <person name="Rounsley S.D."/>
            <person name="Shea T.P."/>
            <person name="Benito M.-I."/>
            <person name="Town C.D."/>
            <person name="Fujii C.Y."/>
            <person name="Mason T.M."/>
            <person name="Bowman C.L."/>
            <person name="Barnstead M.E."/>
            <person name="Feldblyum T.V."/>
            <person name="Buell C.R."/>
            <person name="Ketchum K.A."/>
            <person name="Lee J.J."/>
            <person name="Ronning C.M."/>
            <person name="Koo H.L."/>
            <person name="Moffat K.S."/>
            <person name="Cronin L.A."/>
            <person name="Shen M."/>
            <person name="Pai G."/>
            <person name="Van Aken S."/>
            <person name="Umayam L."/>
            <person name="Tallon L.J."/>
            <person name="Gill J.E."/>
            <person name="Adams M.D."/>
            <person name="Carrera A.J."/>
            <person name="Creasy T.H."/>
            <person name="Goodman H.M."/>
            <person name="Somerville C.R."/>
            <person name="Copenhaver G.P."/>
            <person name="Preuss D."/>
            <person name="Nierman W.C."/>
            <person name="White O."/>
            <person name="Eisen J.A."/>
            <person name="Salzberg S.L."/>
            <person name="Fraser C.M."/>
            <person name="Venter J.C."/>
        </authorList>
    </citation>
    <scope>NUCLEOTIDE SEQUENCE [LARGE SCALE GENOMIC DNA]</scope>
    <source>
        <strain>cv. Columbia</strain>
    </source>
</reference>
<reference key="2">
    <citation type="journal article" date="2017" name="Plant J.">
        <title>Araport11: a complete reannotation of the Arabidopsis thaliana reference genome.</title>
        <authorList>
            <person name="Cheng C.Y."/>
            <person name="Krishnakumar V."/>
            <person name="Chan A.P."/>
            <person name="Thibaud-Nissen F."/>
            <person name="Schobel S."/>
            <person name="Town C.D."/>
        </authorList>
    </citation>
    <scope>GENOME REANNOTATION</scope>
    <source>
        <strain>cv. Columbia</strain>
    </source>
</reference>
<reference key="3">
    <citation type="journal article" date="2005" name="Plant Physiol.">
        <title>Analysis of the cDNAs of hypothetical genes on Arabidopsis chromosome 2 reveals numerous transcript variants.</title>
        <authorList>
            <person name="Xiao Y.-L."/>
            <person name="Smith S.R."/>
            <person name="Ishmael N."/>
            <person name="Redman J.C."/>
            <person name="Kumar N."/>
            <person name="Monaghan E.L."/>
            <person name="Ayele M."/>
            <person name="Haas B.J."/>
            <person name="Wu H.C."/>
            <person name="Town C.D."/>
        </authorList>
    </citation>
    <scope>NUCLEOTIDE SEQUENCE [LARGE SCALE MRNA] (ISOFORMS 1 AND 2)</scope>
    <source>
        <strain>cv. Columbia</strain>
    </source>
</reference>
<reference key="4">
    <citation type="submission" date="2005-03" db="EMBL/GenBank/DDBJ databases">
        <authorList>
            <person name="Underwood B.A."/>
            <person name="Xiao Y.-L."/>
            <person name="Moskal W.A. Jr."/>
            <person name="Monaghan E.L."/>
            <person name="Wang W."/>
            <person name="Redman J.C."/>
            <person name="Wu H.C."/>
            <person name="Utterback T."/>
            <person name="Town C.D."/>
        </authorList>
    </citation>
    <scope>NUCLEOTIDE SEQUENCE [LARGE SCALE MRNA] (ISOFORM 2)</scope>
    <source>
        <strain>cv. Columbia</strain>
    </source>
</reference>
<reference key="5">
    <citation type="journal article" date="2008" name="Plant Cell Physiol.">
        <title>Antagonistic jacalin-related lectins regulate the size of ER body-type beta-glucosidase complexes in Arabidopsis thaliana.</title>
        <authorList>
            <person name="Nagano A.J."/>
            <person name="Fukao Y."/>
            <person name="Fujiwara M."/>
            <person name="Nishimura M."/>
            <person name="Hara-Nishimura I."/>
        </authorList>
    </citation>
    <scope>GENE FAMILY</scope>
    <scope>NOMENCLATURE</scope>
</reference>
<accession>O22829</accession>
<accession>Q5XVC6</accession>
<comment type="alternative products">
    <event type="alternative splicing"/>
    <isoform>
        <id>O22829-1</id>
        <name>1</name>
        <sequence type="displayed"/>
    </isoform>
    <isoform>
        <id>O22829-2</id>
        <name>2</name>
        <sequence type="described" ref="VSP_056717"/>
    </isoform>
</comment>
<comment type="similarity">
    <text evidence="1 4">Belongs to the jacalin lectin family.</text>
</comment>
<organism>
    <name type="scientific">Arabidopsis thaliana</name>
    <name type="common">Mouse-ear cress</name>
    <dbReference type="NCBI Taxonomy" id="3702"/>
    <lineage>
        <taxon>Eukaryota</taxon>
        <taxon>Viridiplantae</taxon>
        <taxon>Streptophyta</taxon>
        <taxon>Embryophyta</taxon>
        <taxon>Tracheophyta</taxon>
        <taxon>Spermatophyta</taxon>
        <taxon>Magnoliopsida</taxon>
        <taxon>eudicotyledons</taxon>
        <taxon>Gunneridae</taxon>
        <taxon>Pentapetalae</taxon>
        <taxon>rosids</taxon>
        <taxon>malvids</taxon>
        <taxon>Brassicales</taxon>
        <taxon>Brassicaceae</taxon>
        <taxon>Camelineae</taxon>
        <taxon>Arabidopsis</taxon>
    </lineage>
</organism>
<evidence type="ECO:0000255" key="1">
    <source>
        <dbReference type="PROSITE-ProRule" id="PRU01088"/>
    </source>
</evidence>
<evidence type="ECO:0000303" key="2">
    <source>
    </source>
</evidence>
<evidence type="ECO:0000303" key="3">
    <source ref="4"/>
</evidence>
<evidence type="ECO:0000305" key="4"/>
<keyword id="KW-0025">Alternative splicing</keyword>
<keyword id="KW-0430">Lectin</keyword>
<keyword id="KW-1185">Reference proteome</keyword>
<feature type="chain" id="PRO_0000430389" description="Jacalin-related lectin 25">
    <location>
        <begin position="1"/>
        <end position="309"/>
    </location>
</feature>
<feature type="domain" description="Jacalin-type lectin" evidence="1">
    <location>
        <begin position="8"/>
        <end position="190"/>
    </location>
</feature>
<feature type="splice variant" id="VSP_056717" description="In isoform 2." evidence="2 3">
    <location>
        <begin position="86"/>
        <end position="104"/>
    </location>
</feature>
<dbReference type="EMBL" id="AC002333">
    <property type="protein sequence ID" value="AAB64032.1"/>
    <property type="molecule type" value="Genomic_DNA"/>
</dbReference>
<dbReference type="EMBL" id="CP002685">
    <property type="protein sequence ID" value="AEC10314.1"/>
    <property type="molecule type" value="Genomic_DNA"/>
</dbReference>
<dbReference type="EMBL" id="CP002685">
    <property type="protein sequence ID" value="AEC10315.1"/>
    <property type="molecule type" value="Genomic_DNA"/>
</dbReference>
<dbReference type="EMBL" id="AY735597">
    <property type="protein sequence ID" value="AAU44467.1"/>
    <property type="molecule type" value="mRNA"/>
</dbReference>
<dbReference type="EMBL" id="AY735596">
    <property type="protein sequence ID" value="AAU44466.1"/>
    <property type="molecule type" value="mRNA"/>
</dbReference>
<dbReference type="EMBL" id="AY954835">
    <property type="protein sequence ID" value="AAX55161.1"/>
    <property type="molecule type" value="mRNA"/>
</dbReference>
<dbReference type="PIR" id="H84869">
    <property type="entry name" value="H84869"/>
</dbReference>
<dbReference type="RefSeq" id="NP_001031536.1">
    <molecule id="O22829-2"/>
    <property type="nucleotide sequence ID" value="NM_001036459.1"/>
</dbReference>
<dbReference type="RefSeq" id="NP_181902.1">
    <molecule id="O22829-1"/>
    <property type="nucleotide sequence ID" value="NM_129936.2"/>
</dbReference>
<dbReference type="SMR" id="O22829"/>
<dbReference type="PaxDb" id="3702-AT2G43740.1"/>
<dbReference type="ProteomicsDB" id="232288">
    <molecule id="O22829-1"/>
</dbReference>
<dbReference type="EnsemblPlants" id="AT2G43740.1">
    <molecule id="O22829-1"/>
    <property type="protein sequence ID" value="AT2G43740.1"/>
    <property type="gene ID" value="AT2G43740"/>
</dbReference>
<dbReference type="EnsemblPlants" id="AT2G43740.2">
    <molecule id="O22829-2"/>
    <property type="protein sequence ID" value="AT2G43740.2"/>
    <property type="gene ID" value="AT2G43740"/>
</dbReference>
<dbReference type="GeneID" id="818976"/>
<dbReference type="Gramene" id="AT2G43740.1">
    <molecule id="O22829-1"/>
    <property type="protein sequence ID" value="AT2G43740.1"/>
    <property type="gene ID" value="AT2G43740"/>
</dbReference>
<dbReference type="Gramene" id="AT2G43740.2">
    <molecule id="O22829-2"/>
    <property type="protein sequence ID" value="AT2G43740.2"/>
    <property type="gene ID" value="AT2G43740"/>
</dbReference>
<dbReference type="KEGG" id="ath:AT2G43740"/>
<dbReference type="Araport" id="AT2G43740"/>
<dbReference type="TAIR" id="AT2G43740"/>
<dbReference type="eggNOG" id="ENOG502S91T">
    <property type="taxonomic scope" value="Eukaryota"/>
</dbReference>
<dbReference type="HOGENOM" id="CLU_076205_0_0_1"/>
<dbReference type="InParanoid" id="O22829"/>
<dbReference type="OMA" id="NLEWDEK"/>
<dbReference type="PhylomeDB" id="O22829"/>
<dbReference type="PRO" id="PR:O22829"/>
<dbReference type="Proteomes" id="UP000006548">
    <property type="component" value="Chromosome 2"/>
</dbReference>
<dbReference type="ExpressionAtlas" id="O22829">
    <property type="expression patterns" value="baseline and differential"/>
</dbReference>
<dbReference type="GO" id="GO:0030246">
    <property type="term" value="F:carbohydrate binding"/>
    <property type="evidence" value="ECO:0007669"/>
    <property type="project" value="UniProtKB-KW"/>
</dbReference>
<dbReference type="Gene3D" id="2.100.10.30">
    <property type="entry name" value="Jacalin-like lectin domain"/>
    <property type="match status" value="1"/>
</dbReference>
<dbReference type="InterPro" id="IPR001229">
    <property type="entry name" value="Jacalin-like_lectin_dom"/>
</dbReference>
<dbReference type="InterPro" id="IPR036404">
    <property type="entry name" value="Jacalin-like_lectin_dom_sf"/>
</dbReference>
<dbReference type="PANTHER" id="PTHR47293:SF70">
    <property type="entry name" value="JACALIN-RELATED LECTIN 24-RELATED"/>
    <property type="match status" value="1"/>
</dbReference>
<dbReference type="PANTHER" id="PTHR47293">
    <property type="entry name" value="JACALIN-RELATED LECTIN 3"/>
    <property type="match status" value="1"/>
</dbReference>
<dbReference type="Pfam" id="PF01419">
    <property type="entry name" value="Jacalin"/>
    <property type="match status" value="1"/>
</dbReference>
<dbReference type="SMART" id="SM00915">
    <property type="entry name" value="Jacalin"/>
    <property type="match status" value="1"/>
</dbReference>
<dbReference type="SUPFAM" id="SSF51101">
    <property type="entry name" value="Mannose-binding lectins"/>
    <property type="match status" value="1"/>
</dbReference>
<dbReference type="PROSITE" id="PS51752">
    <property type="entry name" value="JACALIN_LECTIN"/>
    <property type="match status" value="1"/>
</dbReference>
<sequence>MKSRGREMFKVGPIGSQRAYLKNLEWEEKGRNMISSIYVAFDKDTINSIQFSYCQNGGHVVSKKYGMSDAQKQKYGSYNGRFHVMFVFALVTDDHVKTNLCNIQVRLNDDEFVTGLSAIYLCKGITNLNIHTNQGKHGPICDRYSSSKNIMDNYKVEIDVKIRDRREFGGFFGSFDNYGTLTSIGIYVCPITRINDVALRTNYKVTDDYDDQSTFYQSSGPLTTINHNRKLEYQMPHEVSDVKPIVHNPNFEDKISLYQSSDRLARSTNTRTLEYQIPEFLDVNPIGRKSKLKYGIFSKLARLFRNLLD</sequence>
<name>JAL25_ARATH</name>